<keyword id="KW-0378">Hydrolase</keyword>
<keyword id="KW-0479">Metal-binding</keyword>
<keyword id="KW-0862">Zinc</keyword>
<sequence>MTVQRILIVSGTHGNEINPVWAVKQFNREENSLKHGIEYEYIIGNPVAYEKGCRYIDVDLNRSFKESENCDQQKNSFYETNRANFLLDEFGIDGSKPCQIVIDLHTTTANMGTSIVLYGRRFKDFCLAALLQNKFGLPIYLHEKDKAQTGFLVEAWPCGLVIEIGAVAQNFYDPKIIDRFSLIISSLREEIDKLKNNLIELPKELVVYVHQGSIDYPRDKKGVIDGLIHPERINQDWKMIKKGDPLFLDSQGIVHKYDGDQLIWPVFIGEVAYKEKNIAMSYTKKEVICSKKQWVQDFESL</sequence>
<feature type="chain" id="PRO_1000147941" description="Probable aspartoacylase">
    <location>
        <begin position="1"/>
        <end position="301"/>
    </location>
</feature>
<feature type="binding site" evidence="1">
    <location>
        <position position="13"/>
    </location>
    <ligand>
        <name>Zn(2+)</name>
        <dbReference type="ChEBI" id="CHEBI:29105"/>
    </ligand>
</feature>
<feature type="binding site" evidence="1">
    <location>
        <position position="16"/>
    </location>
    <ligand>
        <name>Zn(2+)</name>
        <dbReference type="ChEBI" id="CHEBI:29105"/>
    </ligand>
</feature>
<feature type="binding site" evidence="1">
    <location>
        <position position="54"/>
    </location>
    <ligand>
        <name>substrate</name>
    </ligand>
</feature>
<feature type="binding site" evidence="1">
    <location>
        <begin position="61"/>
        <end position="62"/>
    </location>
    <ligand>
        <name>substrate</name>
    </ligand>
</feature>
<feature type="binding site" evidence="1">
    <location>
        <position position="105"/>
    </location>
    <ligand>
        <name>Zn(2+)</name>
        <dbReference type="ChEBI" id="CHEBI:29105"/>
    </ligand>
</feature>
<feature type="binding site" evidence="1">
    <location>
        <position position="163"/>
    </location>
    <ligand>
        <name>substrate</name>
    </ligand>
</feature>
<feature type="binding site" evidence="1">
    <location>
        <position position="273"/>
    </location>
    <ligand>
        <name>substrate</name>
    </ligand>
</feature>
<evidence type="ECO:0000255" key="1">
    <source>
        <dbReference type="HAMAP-Rule" id="MF_00704"/>
    </source>
</evidence>
<reference key="1">
    <citation type="journal article" date="2007" name="PLoS Genet.">
        <title>Patterns and implications of gene gain and loss in the evolution of Prochlorococcus.</title>
        <authorList>
            <person name="Kettler G.C."/>
            <person name="Martiny A.C."/>
            <person name="Huang K."/>
            <person name="Zucker J."/>
            <person name="Coleman M.L."/>
            <person name="Rodrigue S."/>
            <person name="Chen F."/>
            <person name="Lapidus A."/>
            <person name="Ferriera S."/>
            <person name="Johnson J."/>
            <person name="Steglich C."/>
            <person name="Church G.M."/>
            <person name="Richardson P."/>
            <person name="Chisholm S.W."/>
        </authorList>
    </citation>
    <scope>NUCLEOTIDE SEQUENCE [LARGE SCALE GENOMIC DNA]</scope>
    <source>
        <strain>AS9601</strain>
    </source>
</reference>
<dbReference type="EC" id="3.5.1.15" evidence="1"/>
<dbReference type="EMBL" id="CP000551">
    <property type="protein sequence ID" value="ABM69530.1"/>
    <property type="molecule type" value="Genomic_DNA"/>
</dbReference>
<dbReference type="RefSeq" id="WP_011817715.1">
    <property type="nucleotide sequence ID" value="NC_008816.1"/>
</dbReference>
<dbReference type="SMR" id="A2BP19"/>
<dbReference type="STRING" id="146891.A9601_02421"/>
<dbReference type="KEGG" id="pmb:A9601_02421"/>
<dbReference type="eggNOG" id="COG2988">
    <property type="taxonomic scope" value="Bacteria"/>
</dbReference>
<dbReference type="HOGENOM" id="CLU_083292_0_0_3"/>
<dbReference type="OrthoDB" id="531770at2"/>
<dbReference type="Proteomes" id="UP000002590">
    <property type="component" value="Chromosome"/>
</dbReference>
<dbReference type="GO" id="GO:0005829">
    <property type="term" value="C:cytosol"/>
    <property type="evidence" value="ECO:0007669"/>
    <property type="project" value="TreeGrafter"/>
</dbReference>
<dbReference type="GO" id="GO:0019807">
    <property type="term" value="F:aspartoacylase activity"/>
    <property type="evidence" value="ECO:0007669"/>
    <property type="project" value="UniProtKB-UniRule"/>
</dbReference>
<dbReference type="GO" id="GO:0016788">
    <property type="term" value="F:hydrolase activity, acting on ester bonds"/>
    <property type="evidence" value="ECO:0007669"/>
    <property type="project" value="InterPro"/>
</dbReference>
<dbReference type="GO" id="GO:0008270">
    <property type="term" value="F:zinc ion binding"/>
    <property type="evidence" value="ECO:0007669"/>
    <property type="project" value="UniProtKB-UniRule"/>
</dbReference>
<dbReference type="Gene3D" id="2.20.25.160">
    <property type="match status" value="1"/>
</dbReference>
<dbReference type="Gene3D" id="3.40.630.10">
    <property type="entry name" value="Zn peptidases"/>
    <property type="match status" value="1"/>
</dbReference>
<dbReference type="HAMAP" id="MF_00704">
    <property type="entry name" value="Aspartoacylase"/>
    <property type="match status" value="1"/>
</dbReference>
<dbReference type="InterPro" id="IPR050178">
    <property type="entry name" value="AspA/AstE_fam"/>
</dbReference>
<dbReference type="InterPro" id="IPR016708">
    <property type="entry name" value="Aspartoacylase"/>
</dbReference>
<dbReference type="InterPro" id="IPR055438">
    <property type="entry name" value="AstE_AspA_cat"/>
</dbReference>
<dbReference type="InterPro" id="IPR007036">
    <property type="entry name" value="Aste_AspA_hybrid_dom"/>
</dbReference>
<dbReference type="NCBIfam" id="NF002601">
    <property type="entry name" value="PRK02259.1"/>
    <property type="match status" value="1"/>
</dbReference>
<dbReference type="PANTHER" id="PTHR15162">
    <property type="entry name" value="ASPARTOACYLASE"/>
    <property type="match status" value="1"/>
</dbReference>
<dbReference type="PANTHER" id="PTHR15162:SF7">
    <property type="entry name" value="SUCCINYLGLUTAMATE DESUCCINYLASE"/>
    <property type="match status" value="1"/>
</dbReference>
<dbReference type="Pfam" id="PF24827">
    <property type="entry name" value="AstE_AspA_cat"/>
    <property type="match status" value="1"/>
</dbReference>
<dbReference type="Pfam" id="PF04952">
    <property type="entry name" value="AstE_AspA_hybrid"/>
    <property type="match status" value="1"/>
</dbReference>
<dbReference type="PIRSF" id="PIRSF018001">
    <property type="entry name" value="Aspartoacylase"/>
    <property type="match status" value="1"/>
</dbReference>
<dbReference type="SUPFAM" id="SSF53187">
    <property type="entry name" value="Zn-dependent exopeptidases"/>
    <property type="match status" value="1"/>
</dbReference>
<accession>A2BP19</accession>
<proteinExistence type="inferred from homology"/>
<protein>
    <recommendedName>
        <fullName evidence="1">Probable aspartoacylase</fullName>
        <ecNumber evidence="1">3.5.1.15</ecNumber>
    </recommendedName>
</protein>
<comment type="catalytic activity">
    <reaction evidence="1">
        <text>an N-acyl-L-aspartate + H2O = a carboxylate + L-aspartate</text>
        <dbReference type="Rhea" id="RHEA:10872"/>
        <dbReference type="ChEBI" id="CHEBI:15377"/>
        <dbReference type="ChEBI" id="CHEBI:29067"/>
        <dbReference type="ChEBI" id="CHEBI:29991"/>
        <dbReference type="ChEBI" id="CHEBI:58497"/>
        <dbReference type="EC" id="3.5.1.15"/>
    </reaction>
</comment>
<comment type="cofactor">
    <cofactor evidence="1">
        <name>Zn(2+)</name>
        <dbReference type="ChEBI" id="CHEBI:29105"/>
    </cofactor>
    <text evidence="1">Binds 1 zinc ion per subunit.</text>
</comment>
<comment type="similarity">
    <text evidence="1">Belongs to the AspA/AstE family. Aspartoacylase subfamily.</text>
</comment>
<name>ASPA_PROMS</name>
<gene>
    <name type="ordered locus">A9601_02421</name>
</gene>
<organism>
    <name type="scientific">Prochlorococcus marinus (strain AS9601)</name>
    <dbReference type="NCBI Taxonomy" id="146891"/>
    <lineage>
        <taxon>Bacteria</taxon>
        <taxon>Bacillati</taxon>
        <taxon>Cyanobacteriota</taxon>
        <taxon>Cyanophyceae</taxon>
        <taxon>Synechococcales</taxon>
        <taxon>Prochlorococcaceae</taxon>
        <taxon>Prochlorococcus</taxon>
    </lineage>
</organism>